<comment type="subcellular location">
    <subcellularLocation>
        <location evidence="1">Cytoplasm</location>
    </subcellularLocation>
</comment>
<comment type="similarity">
    <text evidence="1">Belongs to the TACO1 family.</text>
</comment>
<organism>
    <name type="scientific">Anoxybacillus flavithermus (strain DSM 21510 / WK1)</name>
    <dbReference type="NCBI Taxonomy" id="491915"/>
    <lineage>
        <taxon>Bacteria</taxon>
        <taxon>Bacillati</taxon>
        <taxon>Bacillota</taxon>
        <taxon>Bacilli</taxon>
        <taxon>Bacillales</taxon>
        <taxon>Anoxybacillaceae</taxon>
        <taxon>Anoxybacillus</taxon>
    </lineage>
</organism>
<accession>B7GFM4</accession>
<evidence type="ECO:0000255" key="1">
    <source>
        <dbReference type="HAMAP-Rule" id="MF_00693"/>
    </source>
</evidence>
<evidence type="ECO:0000256" key="2">
    <source>
        <dbReference type="SAM" id="MobiDB-lite"/>
    </source>
</evidence>
<keyword id="KW-0963">Cytoplasm</keyword>
<keyword id="KW-0238">DNA-binding</keyword>
<keyword id="KW-0804">Transcription</keyword>
<keyword id="KW-0805">Transcription regulation</keyword>
<reference key="1">
    <citation type="journal article" date="2008" name="Genome Biol.">
        <title>Encapsulated in silica: genome, proteome and physiology of the thermophilic bacterium Anoxybacillus flavithermus WK1.</title>
        <authorList>
            <person name="Saw J.H."/>
            <person name="Mountain B.W."/>
            <person name="Feng L."/>
            <person name="Omelchenko M.V."/>
            <person name="Hou S."/>
            <person name="Saito J.A."/>
            <person name="Stott M.B."/>
            <person name="Li D."/>
            <person name="Zhao G."/>
            <person name="Wu J."/>
            <person name="Galperin M.Y."/>
            <person name="Koonin E.V."/>
            <person name="Makarova K.S."/>
            <person name="Wolf Y.I."/>
            <person name="Rigden D.J."/>
            <person name="Dunfield P.F."/>
            <person name="Wang L."/>
            <person name="Alam M."/>
        </authorList>
    </citation>
    <scope>NUCLEOTIDE SEQUENCE [LARGE SCALE GENOMIC DNA]</scope>
    <source>
        <strain>DSM 21510 / WK1</strain>
    </source>
</reference>
<sequence>MAGHSKWKNIQRRKNAQDAKRGKLFMKLAKEIYVAAKMGGGDPTTNATLRLAIEKAKSANMPNENIERAIKKATGNQEHTHYEEIRYEGYGPGGVAVMVICLTDNKNRTASNVRVAFSKNGGNLGETGCVSYLFDRKGLIVIARENLHIDEDDMLLQAIEAGADEMETTEDSFEIYTSPEQFEQVKNTLAAQGFTFATAEITMIPQTYTTLTGDDLTKMLKLIDMLEDDDDVQEIYHNLDESMLE</sequence>
<protein>
    <recommendedName>
        <fullName evidence="1">Probable transcriptional regulatory protein Aflv_0709</fullName>
    </recommendedName>
</protein>
<gene>
    <name type="ordered locus">Aflv_0709</name>
</gene>
<dbReference type="EMBL" id="CP000922">
    <property type="protein sequence ID" value="ACJ33088.1"/>
    <property type="molecule type" value="Genomic_DNA"/>
</dbReference>
<dbReference type="RefSeq" id="WP_012574391.1">
    <property type="nucleotide sequence ID" value="NC_011567.1"/>
</dbReference>
<dbReference type="SMR" id="B7GFM4"/>
<dbReference type="STRING" id="491915.Aflv_0709"/>
<dbReference type="GeneID" id="7036966"/>
<dbReference type="KEGG" id="afl:Aflv_0709"/>
<dbReference type="PATRIC" id="fig|491915.6.peg.725"/>
<dbReference type="eggNOG" id="COG0217">
    <property type="taxonomic scope" value="Bacteria"/>
</dbReference>
<dbReference type="HOGENOM" id="CLU_062974_2_2_9"/>
<dbReference type="Proteomes" id="UP000000742">
    <property type="component" value="Chromosome"/>
</dbReference>
<dbReference type="GO" id="GO:0005829">
    <property type="term" value="C:cytosol"/>
    <property type="evidence" value="ECO:0007669"/>
    <property type="project" value="TreeGrafter"/>
</dbReference>
<dbReference type="GO" id="GO:0003677">
    <property type="term" value="F:DNA binding"/>
    <property type="evidence" value="ECO:0007669"/>
    <property type="project" value="UniProtKB-UniRule"/>
</dbReference>
<dbReference type="GO" id="GO:0006355">
    <property type="term" value="P:regulation of DNA-templated transcription"/>
    <property type="evidence" value="ECO:0007669"/>
    <property type="project" value="UniProtKB-UniRule"/>
</dbReference>
<dbReference type="FunFam" id="1.10.10.200:FF:000002">
    <property type="entry name" value="Probable transcriptional regulatory protein CLM62_37755"/>
    <property type="match status" value="1"/>
</dbReference>
<dbReference type="FunFam" id="3.30.70.980:FF:000002">
    <property type="entry name" value="Probable transcriptional regulatory protein YebC"/>
    <property type="match status" value="1"/>
</dbReference>
<dbReference type="Gene3D" id="1.10.10.200">
    <property type="match status" value="1"/>
</dbReference>
<dbReference type="Gene3D" id="3.30.70.980">
    <property type="match status" value="2"/>
</dbReference>
<dbReference type="HAMAP" id="MF_00693">
    <property type="entry name" value="Transcrip_reg_TACO1"/>
    <property type="match status" value="1"/>
</dbReference>
<dbReference type="InterPro" id="IPR017856">
    <property type="entry name" value="Integrase-like_N"/>
</dbReference>
<dbReference type="InterPro" id="IPR048300">
    <property type="entry name" value="TACO1_YebC-like_2nd/3rd_dom"/>
</dbReference>
<dbReference type="InterPro" id="IPR049083">
    <property type="entry name" value="TACO1_YebC_N"/>
</dbReference>
<dbReference type="InterPro" id="IPR002876">
    <property type="entry name" value="Transcrip_reg_TACO1-like"/>
</dbReference>
<dbReference type="InterPro" id="IPR026564">
    <property type="entry name" value="Transcrip_reg_TACO1-like_dom3"/>
</dbReference>
<dbReference type="InterPro" id="IPR029072">
    <property type="entry name" value="YebC-like"/>
</dbReference>
<dbReference type="NCBIfam" id="NF001030">
    <property type="entry name" value="PRK00110.1"/>
    <property type="match status" value="1"/>
</dbReference>
<dbReference type="NCBIfam" id="NF009044">
    <property type="entry name" value="PRK12378.1"/>
    <property type="match status" value="1"/>
</dbReference>
<dbReference type="NCBIfam" id="TIGR01033">
    <property type="entry name" value="YebC/PmpR family DNA-binding transcriptional regulator"/>
    <property type="match status" value="1"/>
</dbReference>
<dbReference type="PANTHER" id="PTHR12532:SF6">
    <property type="entry name" value="TRANSCRIPTIONAL REGULATORY PROTEIN YEBC-RELATED"/>
    <property type="match status" value="1"/>
</dbReference>
<dbReference type="PANTHER" id="PTHR12532">
    <property type="entry name" value="TRANSLATIONAL ACTIVATOR OF CYTOCHROME C OXIDASE 1"/>
    <property type="match status" value="1"/>
</dbReference>
<dbReference type="Pfam" id="PF20772">
    <property type="entry name" value="TACO1_YebC_N"/>
    <property type="match status" value="1"/>
</dbReference>
<dbReference type="Pfam" id="PF01709">
    <property type="entry name" value="Transcrip_reg"/>
    <property type="match status" value="1"/>
</dbReference>
<dbReference type="SUPFAM" id="SSF75625">
    <property type="entry name" value="YebC-like"/>
    <property type="match status" value="1"/>
</dbReference>
<proteinExistence type="inferred from homology"/>
<name>Y709_ANOFW</name>
<feature type="chain" id="PRO_1000132150" description="Probable transcriptional regulatory protein Aflv_0709">
    <location>
        <begin position="1"/>
        <end position="245"/>
    </location>
</feature>
<feature type="region of interest" description="Disordered" evidence="2">
    <location>
        <begin position="1"/>
        <end position="21"/>
    </location>
</feature>
<feature type="compositionally biased region" description="Basic residues" evidence="2">
    <location>
        <begin position="1"/>
        <end position="14"/>
    </location>
</feature>